<reference key="1">
    <citation type="journal article" date="2007" name="ISME J.">
        <title>Population level functional diversity in a microbial community revealed by comparative genomic and metagenomic analyses.</title>
        <authorList>
            <person name="Bhaya D."/>
            <person name="Grossman A.R."/>
            <person name="Steunou A.-S."/>
            <person name="Khuri N."/>
            <person name="Cohan F.M."/>
            <person name="Hamamura N."/>
            <person name="Melendrez M.C."/>
            <person name="Bateson M.M."/>
            <person name="Ward D.M."/>
            <person name="Heidelberg J.F."/>
        </authorList>
    </citation>
    <scope>NUCLEOTIDE SEQUENCE [LARGE SCALE GENOMIC DNA]</scope>
    <source>
        <strain>JA-2-3B'a(2-13)</strain>
    </source>
</reference>
<accession>Q2JJ22</accession>
<dbReference type="EC" id="2.4.2.9" evidence="1"/>
<dbReference type="EMBL" id="CP000240">
    <property type="protein sequence ID" value="ABD03367.1"/>
    <property type="molecule type" value="Genomic_DNA"/>
</dbReference>
<dbReference type="RefSeq" id="WP_011433996.1">
    <property type="nucleotide sequence ID" value="NC_007776.1"/>
</dbReference>
<dbReference type="SMR" id="Q2JJ22"/>
<dbReference type="STRING" id="321332.CYB_2433"/>
<dbReference type="KEGG" id="cyb:CYB_2433"/>
<dbReference type="eggNOG" id="COG2065">
    <property type="taxonomic scope" value="Bacteria"/>
</dbReference>
<dbReference type="HOGENOM" id="CLU_094234_2_1_3"/>
<dbReference type="OrthoDB" id="9802227at2"/>
<dbReference type="Proteomes" id="UP000001938">
    <property type="component" value="Chromosome"/>
</dbReference>
<dbReference type="GO" id="GO:0004845">
    <property type="term" value="F:uracil phosphoribosyltransferase activity"/>
    <property type="evidence" value="ECO:0007669"/>
    <property type="project" value="UniProtKB-UniRule"/>
</dbReference>
<dbReference type="GO" id="GO:0006355">
    <property type="term" value="P:regulation of DNA-templated transcription"/>
    <property type="evidence" value="ECO:0007669"/>
    <property type="project" value="UniProtKB-UniRule"/>
</dbReference>
<dbReference type="CDD" id="cd06223">
    <property type="entry name" value="PRTases_typeI"/>
    <property type="match status" value="1"/>
</dbReference>
<dbReference type="Gene3D" id="3.40.50.2020">
    <property type="match status" value="1"/>
</dbReference>
<dbReference type="HAMAP" id="MF_01219">
    <property type="entry name" value="PyrR"/>
    <property type="match status" value="1"/>
</dbReference>
<dbReference type="InterPro" id="IPR000836">
    <property type="entry name" value="PRibTrfase_dom"/>
</dbReference>
<dbReference type="InterPro" id="IPR029057">
    <property type="entry name" value="PRTase-like"/>
</dbReference>
<dbReference type="InterPro" id="IPR023050">
    <property type="entry name" value="PyrR"/>
</dbReference>
<dbReference type="InterPro" id="IPR050137">
    <property type="entry name" value="PyrR_bifunctional"/>
</dbReference>
<dbReference type="NCBIfam" id="NF003549">
    <property type="entry name" value="PRK05205.1-5"/>
    <property type="match status" value="1"/>
</dbReference>
<dbReference type="PANTHER" id="PTHR11608">
    <property type="entry name" value="BIFUNCTIONAL PROTEIN PYRR"/>
    <property type="match status" value="1"/>
</dbReference>
<dbReference type="PANTHER" id="PTHR11608:SF0">
    <property type="entry name" value="BIFUNCTIONAL PROTEIN PYRR"/>
    <property type="match status" value="1"/>
</dbReference>
<dbReference type="Pfam" id="PF00156">
    <property type="entry name" value="Pribosyltran"/>
    <property type="match status" value="1"/>
</dbReference>
<dbReference type="SUPFAM" id="SSF53271">
    <property type="entry name" value="PRTase-like"/>
    <property type="match status" value="1"/>
</dbReference>
<organism>
    <name type="scientific">Synechococcus sp. (strain JA-2-3B'a(2-13))</name>
    <name type="common">Cyanobacteria bacterium Yellowstone B-Prime</name>
    <dbReference type="NCBI Taxonomy" id="321332"/>
    <lineage>
        <taxon>Bacteria</taxon>
        <taxon>Bacillati</taxon>
        <taxon>Cyanobacteriota</taxon>
        <taxon>Cyanophyceae</taxon>
        <taxon>Synechococcales</taxon>
        <taxon>Synechococcaceae</taxon>
        <taxon>Synechococcus</taxon>
    </lineage>
</organism>
<comment type="function">
    <text evidence="1">Regulates the transcription of the pyrimidine nucleotide (pyr) operon in response to exogenous pyrimidines.</text>
</comment>
<comment type="function">
    <text evidence="1">Also displays a weak uracil phosphoribosyltransferase activity which is not physiologically significant.</text>
</comment>
<comment type="catalytic activity">
    <reaction evidence="1">
        <text>UMP + diphosphate = 5-phospho-alpha-D-ribose 1-diphosphate + uracil</text>
        <dbReference type="Rhea" id="RHEA:13017"/>
        <dbReference type="ChEBI" id="CHEBI:17568"/>
        <dbReference type="ChEBI" id="CHEBI:33019"/>
        <dbReference type="ChEBI" id="CHEBI:57865"/>
        <dbReference type="ChEBI" id="CHEBI:58017"/>
        <dbReference type="EC" id="2.4.2.9"/>
    </reaction>
</comment>
<comment type="similarity">
    <text evidence="1">Belongs to the purine/pyrimidine phosphoribosyltransferase family. PyrR subfamily.</text>
</comment>
<keyword id="KW-0328">Glycosyltransferase</keyword>
<keyword id="KW-1185">Reference proteome</keyword>
<keyword id="KW-0804">Transcription</keyword>
<keyword id="KW-0805">Transcription regulation</keyword>
<keyword id="KW-0808">Transferase</keyword>
<proteinExistence type="inferred from homology"/>
<protein>
    <recommendedName>
        <fullName evidence="1">Bifunctional protein PyrR</fullName>
    </recommendedName>
    <domain>
        <recommendedName>
            <fullName evidence="1">Pyrimidine operon regulatory protein</fullName>
        </recommendedName>
    </domain>
    <domain>
        <recommendedName>
            <fullName evidence="1">Uracil phosphoribosyltransferase</fullName>
            <shortName evidence="1">UPRTase</shortName>
            <ecNumber evidence="1">2.4.2.9</ecNumber>
        </recommendedName>
    </domain>
</protein>
<feature type="chain" id="PRO_1000053882" description="Bifunctional protein PyrR">
    <location>
        <begin position="1"/>
        <end position="182"/>
    </location>
</feature>
<feature type="short sequence motif" description="PRPP-binding" evidence="1">
    <location>
        <begin position="97"/>
        <end position="109"/>
    </location>
</feature>
<gene>
    <name evidence="1" type="primary">pyrR</name>
    <name type="ordered locus">CYB_2433</name>
</gene>
<name>PYRR_SYNJB</name>
<evidence type="ECO:0000255" key="1">
    <source>
        <dbReference type="HAMAP-Rule" id="MF_01219"/>
    </source>
</evidence>
<sequence>MSEIEVFDAEQLAGLIEGLAEAIGRDHPHLQKLTLIGIRTRGVPLAYRLRDRIATLLGIPPQVGELDITFFRDDLSAGGLRTPDRSEMPRDLTGQEVVLVDDVIFRGRTVRAALEALNHFGRPERVRLAVLIDRGHRQFPIQPDYCGCQLSTEPEQTVRVHLRETDAEERVLLIDKTAKIKS</sequence>